<name>TYSY_BACHK</name>
<reference key="1">
    <citation type="journal article" date="2006" name="J. Bacteriol.">
        <title>Pathogenomic sequence analysis of Bacillus cereus and Bacillus thuringiensis isolates closely related to Bacillus anthracis.</title>
        <authorList>
            <person name="Han C.S."/>
            <person name="Xie G."/>
            <person name="Challacombe J.F."/>
            <person name="Altherr M.R."/>
            <person name="Bhotika S.S."/>
            <person name="Bruce D."/>
            <person name="Campbell C.S."/>
            <person name="Campbell M.L."/>
            <person name="Chen J."/>
            <person name="Chertkov O."/>
            <person name="Cleland C."/>
            <person name="Dimitrijevic M."/>
            <person name="Doggett N.A."/>
            <person name="Fawcett J.J."/>
            <person name="Glavina T."/>
            <person name="Goodwin L.A."/>
            <person name="Hill K.K."/>
            <person name="Hitchcock P."/>
            <person name="Jackson P.J."/>
            <person name="Keim P."/>
            <person name="Kewalramani A.R."/>
            <person name="Longmire J."/>
            <person name="Lucas S."/>
            <person name="Malfatti S."/>
            <person name="McMurry K."/>
            <person name="Meincke L.J."/>
            <person name="Misra M."/>
            <person name="Moseman B.L."/>
            <person name="Mundt M."/>
            <person name="Munk A.C."/>
            <person name="Okinaka R.T."/>
            <person name="Parson-Quintana B."/>
            <person name="Reilly L.P."/>
            <person name="Richardson P."/>
            <person name="Robinson D.L."/>
            <person name="Rubin E."/>
            <person name="Saunders E."/>
            <person name="Tapia R."/>
            <person name="Tesmer J.G."/>
            <person name="Thayer N."/>
            <person name="Thompson L.S."/>
            <person name="Tice H."/>
            <person name="Ticknor L.O."/>
            <person name="Wills P.L."/>
            <person name="Brettin T.S."/>
            <person name="Gilna P."/>
        </authorList>
    </citation>
    <scope>NUCLEOTIDE SEQUENCE [LARGE SCALE GENOMIC DNA]</scope>
    <source>
        <strain>97-27</strain>
    </source>
</reference>
<organism>
    <name type="scientific">Bacillus thuringiensis subsp. konkukian (strain 97-27)</name>
    <dbReference type="NCBI Taxonomy" id="281309"/>
    <lineage>
        <taxon>Bacteria</taxon>
        <taxon>Bacillati</taxon>
        <taxon>Bacillota</taxon>
        <taxon>Bacilli</taxon>
        <taxon>Bacillales</taxon>
        <taxon>Bacillaceae</taxon>
        <taxon>Bacillus</taxon>
        <taxon>Bacillus cereus group</taxon>
    </lineage>
</organism>
<protein>
    <recommendedName>
        <fullName evidence="1">Thymidylate synthase</fullName>
        <shortName evidence="1">TS</shortName>
        <shortName evidence="1">TSase</shortName>
        <ecNumber evidence="1">2.1.1.45</ecNumber>
    </recommendedName>
</protein>
<accession>Q6HJC7</accession>
<feature type="chain" id="PRO_0000140925" description="Thymidylate synthase">
    <location>
        <begin position="1"/>
        <end position="318"/>
    </location>
</feature>
<feature type="active site" description="Nucleophile" evidence="1">
    <location>
        <position position="200"/>
    </location>
</feature>
<feature type="binding site" description="in other chain" evidence="1">
    <location>
        <position position="25"/>
    </location>
    <ligand>
        <name>dUMP</name>
        <dbReference type="ChEBI" id="CHEBI:246422"/>
        <note>ligand shared between dimeric partners</note>
    </ligand>
</feature>
<feature type="binding site" evidence="1">
    <location>
        <begin position="180"/>
        <end position="181"/>
    </location>
    <ligand>
        <name>dUMP</name>
        <dbReference type="ChEBI" id="CHEBI:246422"/>
        <note>ligand shared between dimeric partners</note>
    </ligand>
</feature>
<feature type="binding site" description="in other chain" evidence="1">
    <location>
        <begin position="220"/>
        <end position="223"/>
    </location>
    <ligand>
        <name>dUMP</name>
        <dbReference type="ChEBI" id="CHEBI:246422"/>
        <note>ligand shared between dimeric partners</note>
    </ligand>
</feature>
<feature type="binding site" evidence="1">
    <location>
        <position position="223"/>
    </location>
    <ligand>
        <name>(6R)-5,10-methylene-5,6,7,8-tetrahydrofolate</name>
        <dbReference type="ChEBI" id="CHEBI:15636"/>
    </ligand>
</feature>
<feature type="binding site" description="in other chain" evidence="1">
    <location>
        <position position="231"/>
    </location>
    <ligand>
        <name>dUMP</name>
        <dbReference type="ChEBI" id="CHEBI:246422"/>
        <note>ligand shared between dimeric partners</note>
    </ligand>
</feature>
<feature type="binding site" description="in other chain" evidence="1">
    <location>
        <begin position="261"/>
        <end position="263"/>
    </location>
    <ligand>
        <name>dUMP</name>
        <dbReference type="ChEBI" id="CHEBI:246422"/>
        <note>ligand shared between dimeric partners</note>
    </ligand>
</feature>
<feature type="binding site" evidence="1">
    <location>
        <position position="317"/>
    </location>
    <ligand>
        <name>(6R)-5,10-methylene-5,6,7,8-tetrahydrofolate</name>
        <dbReference type="ChEBI" id="CHEBI:15636"/>
    </ligand>
</feature>
<proteinExistence type="inferred from homology"/>
<sequence>MKHAENEYLNLCRHVMEHGTKKEDRTGTGTVSVFGYQMRFDLSKGFPLLTTKRVPFRLVASELLWFMKGDTNIRYLLQHNNNIWNEWAFKSWVESDEYTGPDMIDFGLRSQQDEEFKVQYDEQMELFKKNVLEDDEFSNKYGYLGDVYGKQWRAWKTTAGETLDQLKDVIEMIKKTPDSRRLIVSAWNPEDVPSMALPPCHTLFQFYVADGKLSCQLYQRSGDIFLGIPFNIASYSLLTHLIAHECGLEVGEFVHTIGDAHIYTNHFEQVEKQLAREPRPFPKLTLNPDVKSVFDFEMEDLTIEGYDPHPAIKAPVAV</sequence>
<evidence type="ECO:0000255" key="1">
    <source>
        <dbReference type="HAMAP-Rule" id="MF_00008"/>
    </source>
</evidence>
<comment type="function">
    <text evidence="1">Catalyzes the reductive methylation of 2'-deoxyuridine-5'-monophosphate (dUMP) to 2'-deoxythymidine-5'-monophosphate (dTMP) while utilizing 5,10-methylenetetrahydrofolate (mTHF) as the methyl donor and reductant in the reaction, yielding dihydrofolate (DHF) as a by-product. This enzymatic reaction provides an intracellular de novo source of dTMP, an essential precursor for DNA biosynthesis.</text>
</comment>
<comment type="catalytic activity">
    <reaction evidence="1">
        <text>dUMP + (6R)-5,10-methylene-5,6,7,8-tetrahydrofolate = 7,8-dihydrofolate + dTMP</text>
        <dbReference type="Rhea" id="RHEA:12104"/>
        <dbReference type="ChEBI" id="CHEBI:15636"/>
        <dbReference type="ChEBI" id="CHEBI:57451"/>
        <dbReference type="ChEBI" id="CHEBI:63528"/>
        <dbReference type="ChEBI" id="CHEBI:246422"/>
        <dbReference type="EC" id="2.1.1.45"/>
    </reaction>
</comment>
<comment type="pathway">
    <text evidence="1">Pyrimidine metabolism; dTTP biosynthesis.</text>
</comment>
<comment type="subunit">
    <text evidence="1">Homodimer.</text>
</comment>
<comment type="subcellular location">
    <subcellularLocation>
        <location evidence="1">Cytoplasm</location>
    </subcellularLocation>
</comment>
<comment type="similarity">
    <text evidence="1">Belongs to the thymidylate synthase family. Bacterial-type ThyA subfamily.</text>
</comment>
<keyword id="KW-0963">Cytoplasm</keyword>
<keyword id="KW-0489">Methyltransferase</keyword>
<keyword id="KW-0545">Nucleotide biosynthesis</keyword>
<keyword id="KW-0808">Transferase</keyword>
<gene>
    <name evidence="1" type="primary">thyA</name>
    <name type="ordered locus">BT9727_2020</name>
</gene>
<dbReference type="EC" id="2.1.1.45" evidence="1"/>
<dbReference type="EMBL" id="AE017355">
    <property type="protein sequence ID" value="AAT59764.1"/>
    <property type="molecule type" value="Genomic_DNA"/>
</dbReference>
<dbReference type="RefSeq" id="WP_000679592.1">
    <property type="nucleotide sequence ID" value="NC_005957.1"/>
</dbReference>
<dbReference type="RefSeq" id="YP_036349.1">
    <property type="nucleotide sequence ID" value="NC_005957.1"/>
</dbReference>
<dbReference type="SMR" id="Q6HJC7"/>
<dbReference type="KEGG" id="btk:BT9727_2020"/>
<dbReference type="PATRIC" id="fig|281309.8.peg.2125"/>
<dbReference type="HOGENOM" id="CLU_021669_0_2_9"/>
<dbReference type="UniPathway" id="UPA00575"/>
<dbReference type="Proteomes" id="UP000001301">
    <property type="component" value="Chromosome"/>
</dbReference>
<dbReference type="GO" id="GO:0005829">
    <property type="term" value="C:cytosol"/>
    <property type="evidence" value="ECO:0007669"/>
    <property type="project" value="TreeGrafter"/>
</dbReference>
<dbReference type="GO" id="GO:0004799">
    <property type="term" value="F:thymidylate synthase activity"/>
    <property type="evidence" value="ECO:0007669"/>
    <property type="project" value="UniProtKB-UniRule"/>
</dbReference>
<dbReference type="GO" id="GO:0006231">
    <property type="term" value="P:dTMP biosynthetic process"/>
    <property type="evidence" value="ECO:0007669"/>
    <property type="project" value="UniProtKB-UniRule"/>
</dbReference>
<dbReference type="GO" id="GO:0006235">
    <property type="term" value="P:dTTP biosynthetic process"/>
    <property type="evidence" value="ECO:0007669"/>
    <property type="project" value="UniProtKB-UniRule"/>
</dbReference>
<dbReference type="GO" id="GO:0032259">
    <property type="term" value="P:methylation"/>
    <property type="evidence" value="ECO:0007669"/>
    <property type="project" value="UniProtKB-KW"/>
</dbReference>
<dbReference type="CDD" id="cd00351">
    <property type="entry name" value="TS_Pyrimidine_HMase"/>
    <property type="match status" value="1"/>
</dbReference>
<dbReference type="Gene3D" id="3.30.572.10">
    <property type="entry name" value="Thymidylate synthase/dCMP hydroxymethylase domain"/>
    <property type="match status" value="1"/>
</dbReference>
<dbReference type="HAMAP" id="MF_00008">
    <property type="entry name" value="Thymidy_synth_bact"/>
    <property type="match status" value="1"/>
</dbReference>
<dbReference type="InterPro" id="IPR045097">
    <property type="entry name" value="Thymidate_synth/dCMP_Mease"/>
</dbReference>
<dbReference type="InterPro" id="IPR023451">
    <property type="entry name" value="Thymidate_synth/dCMP_Mease_dom"/>
</dbReference>
<dbReference type="InterPro" id="IPR036926">
    <property type="entry name" value="Thymidate_synth/dCMP_Mease_sf"/>
</dbReference>
<dbReference type="InterPro" id="IPR000398">
    <property type="entry name" value="Thymidylate_synthase"/>
</dbReference>
<dbReference type="InterPro" id="IPR020940">
    <property type="entry name" value="Thymidylate_synthase_AS"/>
</dbReference>
<dbReference type="NCBIfam" id="NF002496">
    <property type="entry name" value="PRK01827.1-2"/>
    <property type="match status" value="1"/>
</dbReference>
<dbReference type="NCBIfam" id="TIGR03284">
    <property type="entry name" value="thym_sym"/>
    <property type="match status" value="1"/>
</dbReference>
<dbReference type="PANTHER" id="PTHR11548:SF9">
    <property type="entry name" value="THYMIDYLATE SYNTHASE"/>
    <property type="match status" value="1"/>
</dbReference>
<dbReference type="PANTHER" id="PTHR11548">
    <property type="entry name" value="THYMIDYLATE SYNTHASE 1"/>
    <property type="match status" value="1"/>
</dbReference>
<dbReference type="Pfam" id="PF00303">
    <property type="entry name" value="Thymidylat_synt"/>
    <property type="match status" value="1"/>
</dbReference>
<dbReference type="PRINTS" id="PR00108">
    <property type="entry name" value="THYMDSNTHASE"/>
</dbReference>
<dbReference type="SUPFAM" id="SSF55831">
    <property type="entry name" value="Thymidylate synthase/dCMP hydroxymethylase"/>
    <property type="match status" value="1"/>
</dbReference>
<dbReference type="PROSITE" id="PS00091">
    <property type="entry name" value="THYMIDYLATE_SYNTHASE"/>
    <property type="match status" value="1"/>
</dbReference>